<accession>Q03MB1</accession>
<name>DER_STRTD</name>
<protein>
    <recommendedName>
        <fullName evidence="1">GTPase Der</fullName>
    </recommendedName>
    <alternativeName>
        <fullName evidence="1">GTP-binding protein EngA</fullName>
    </alternativeName>
</protein>
<proteinExistence type="inferred from homology"/>
<evidence type="ECO:0000255" key="1">
    <source>
        <dbReference type="HAMAP-Rule" id="MF_00195"/>
    </source>
</evidence>
<gene>
    <name evidence="1" type="primary">der</name>
    <name type="synonym">engA</name>
    <name type="ordered locus">STER_0359</name>
</gene>
<keyword id="KW-0342">GTP-binding</keyword>
<keyword id="KW-0547">Nucleotide-binding</keyword>
<keyword id="KW-0677">Repeat</keyword>
<keyword id="KW-0690">Ribosome biogenesis</keyword>
<comment type="function">
    <text evidence="1">GTPase that plays an essential role in the late steps of ribosome biogenesis.</text>
</comment>
<comment type="subunit">
    <text evidence="1">Associates with the 50S ribosomal subunit.</text>
</comment>
<comment type="similarity">
    <text evidence="1">Belongs to the TRAFAC class TrmE-Era-EngA-EngB-Septin-like GTPase superfamily. EngA (Der) GTPase family.</text>
</comment>
<organism>
    <name type="scientific">Streptococcus thermophilus (strain ATCC BAA-491 / LMD-9)</name>
    <dbReference type="NCBI Taxonomy" id="322159"/>
    <lineage>
        <taxon>Bacteria</taxon>
        <taxon>Bacillati</taxon>
        <taxon>Bacillota</taxon>
        <taxon>Bacilli</taxon>
        <taxon>Lactobacillales</taxon>
        <taxon>Streptococcaceae</taxon>
        <taxon>Streptococcus</taxon>
    </lineage>
</organism>
<sequence>MTLPTVAIVGRPNVGKSTLFNRIAGERISIVEDVEGVTRDRIYTSAEWLNRQFSLIDTGGIDDVDAPFMEQIKHQAGIAMTEADVIVFVVSGKEGVTDADEYVARILYKTNKPVILAVNKVDNPEMRADIYDFYSLGLGDPYPVSSVHGIGTGDVLDAIVENLPTEVEEENPDIIRFSLIGRPNVGKSSLINAILGEDRVIASPIAGTTRDAIDTNFVDSEGQEYTMIDTAGMRKSGKVYENTEKYSVMRSMRAIDRSDVVLMVINAEEGIREYDKRIAGFAHEAGKGIIIVVNKWDTIKKDNHTVANWEADIRDQFQFLSYAPIVFVSAKTKQRLNKLPEMIKRISESQNRRISSAVLNDVIMDAIAINPTPTDKGKRLKIFYGTQVSVKPPTFVIFVNEEELMHFSYMRFLENQIRQAFGFEGTPIHLIARKRK</sequence>
<dbReference type="EMBL" id="CP000419">
    <property type="protein sequence ID" value="ABJ65661.1"/>
    <property type="molecule type" value="Genomic_DNA"/>
</dbReference>
<dbReference type="RefSeq" id="WP_011680741.1">
    <property type="nucleotide sequence ID" value="NC_008532.1"/>
</dbReference>
<dbReference type="SMR" id="Q03MB1"/>
<dbReference type="KEGG" id="ste:STER_0359"/>
<dbReference type="HOGENOM" id="CLU_016077_6_2_9"/>
<dbReference type="GO" id="GO:0005525">
    <property type="term" value="F:GTP binding"/>
    <property type="evidence" value="ECO:0007669"/>
    <property type="project" value="UniProtKB-UniRule"/>
</dbReference>
<dbReference type="GO" id="GO:0043022">
    <property type="term" value="F:ribosome binding"/>
    <property type="evidence" value="ECO:0007669"/>
    <property type="project" value="TreeGrafter"/>
</dbReference>
<dbReference type="GO" id="GO:0042254">
    <property type="term" value="P:ribosome biogenesis"/>
    <property type="evidence" value="ECO:0007669"/>
    <property type="project" value="UniProtKB-KW"/>
</dbReference>
<dbReference type="CDD" id="cd01894">
    <property type="entry name" value="EngA1"/>
    <property type="match status" value="1"/>
</dbReference>
<dbReference type="CDD" id="cd01895">
    <property type="entry name" value="EngA2"/>
    <property type="match status" value="1"/>
</dbReference>
<dbReference type="FunFam" id="3.30.300.20:FF:000004">
    <property type="entry name" value="GTPase Der"/>
    <property type="match status" value="1"/>
</dbReference>
<dbReference type="FunFam" id="3.40.50.300:FF:000040">
    <property type="entry name" value="GTPase Der"/>
    <property type="match status" value="1"/>
</dbReference>
<dbReference type="FunFam" id="3.40.50.300:FF:000057">
    <property type="entry name" value="GTPase Der"/>
    <property type="match status" value="1"/>
</dbReference>
<dbReference type="Gene3D" id="3.30.300.20">
    <property type="match status" value="1"/>
</dbReference>
<dbReference type="Gene3D" id="3.40.50.300">
    <property type="entry name" value="P-loop containing nucleotide triphosphate hydrolases"/>
    <property type="match status" value="2"/>
</dbReference>
<dbReference type="HAMAP" id="MF_00195">
    <property type="entry name" value="GTPase_Der"/>
    <property type="match status" value="1"/>
</dbReference>
<dbReference type="InterPro" id="IPR031166">
    <property type="entry name" value="G_ENGA"/>
</dbReference>
<dbReference type="InterPro" id="IPR006073">
    <property type="entry name" value="GTP-bd"/>
</dbReference>
<dbReference type="InterPro" id="IPR016484">
    <property type="entry name" value="GTPase_Der"/>
</dbReference>
<dbReference type="InterPro" id="IPR032859">
    <property type="entry name" value="KH_dom-like"/>
</dbReference>
<dbReference type="InterPro" id="IPR015946">
    <property type="entry name" value="KH_dom-like_a/b"/>
</dbReference>
<dbReference type="InterPro" id="IPR027417">
    <property type="entry name" value="P-loop_NTPase"/>
</dbReference>
<dbReference type="InterPro" id="IPR005225">
    <property type="entry name" value="Small_GTP-bd"/>
</dbReference>
<dbReference type="NCBIfam" id="TIGR03594">
    <property type="entry name" value="GTPase_EngA"/>
    <property type="match status" value="1"/>
</dbReference>
<dbReference type="NCBIfam" id="TIGR00231">
    <property type="entry name" value="small_GTP"/>
    <property type="match status" value="2"/>
</dbReference>
<dbReference type="PANTHER" id="PTHR43834">
    <property type="entry name" value="GTPASE DER"/>
    <property type="match status" value="1"/>
</dbReference>
<dbReference type="PANTHER" id="PTHR43834:SF6">
    <property type="entry name" value="GTPASE DER"/>
    <property type="match status" value="1"/>
</dbReference>
<dbReference type="Pfam" id="PF14714">
    <property type="entry name" value="KH_dom-like"/>
    <property type="match status" value="1"/>
</dbReference>
<dbReference type="Pfam" id="PF01926">
    <property type="entry name" value="MMR_HSR1"/>
    <property type="match status" value="2"/>
</dbReference>
<dbReference type="PIRSF" id="PIRSF006485">
    <property type="entry name" value="GTP-binding_EngA"/>
    <property type="match status" value="1"/>
</dbReference>
<dbReference type="PRINTS" id="PR00326">
    <property type="entry name" value="GTP1OBG"/>
</dbReference>
<dbReference type="SUPFAM" id="SSF52540">
    <property type="entry name" value="P-loop containing nucleoside triphosphate hydrolases"/>
    <property type="match status" value="2"/>
</dbReference>
<dbReference type="PROSITE" id="PS51712">
    <property type="entry name" value="G_ENGA"/>
    <property type="match status" value="2"/>
</dbReference>
<feature type="chain" id="PRO_1000011764" description="GTPase Der">
    <location>
        <begin position="1"/>
        <end position="436"/>
    </location>
</feature>
<feature type="domain" description="EngA-type G 1">
    <location>
        <begin position="4"/>
        <end position="167"/>
    </location>
</feature>
<feature type="domain" description="EngA-type G 2">
    <location>
        <begin position="175"/>
        <end position="351"/>
    </location>
</feature>
<feature type="domain" description="KH-like" evidence="1">
    <location>
        <begin position="352"/>
        <end position="436"/>
    </location>
</feature>
<feature type="binding site" evidence="1">
    <location>
        <begin position="10"/>
        <end position="17"/>
    </location>
    <ligand>
        <name>GTP</name>
        <dbReference type="ChEBI" id="CHEBI:37565"/>
        <label>1</label>
    </ligand>
</feature>
<feature type="binding site" evidence="1">
    <location>
        <begin position="57"/>
        <end position="61"/>
    </location>
    <ligand>
        <name>GTP</name>
        <dbReference type="ChEBI" id="CHEBI:37565"/>
        <label>1</label>
    </ligand>
</feature>
<feature type="binding site" evidence="1">
    <location>
        <begin position="119"/>
        <end position="122"/>
    </location>
    <ligand>
        <name>GTP</name>
        <dbReference type="ChEBI" id="CHEBI:37565"/>
        <label>1</label>
    </ligand>
</feature>
<feature type="binding site" evidence="1">
    <location>
        <begin position="181"/>
        <end position="188"/>
    </location>
    <ligand>
        <name>GTP</name>
        <dbReference type="ChEBI" id="CHEBI:37565"/>
        <label>2</label>
    </ligand>
</feature>
<feature type="binding site" evidence="1">
    <location>
        <begin position="229"/>
        <end position="233"/>
    </location>
    <ligand>
        <name>GTP</name>
        <dbReference type="ChEBI" id="CHEBI:37565"/>
        <label>2</label>
    </ligand>
</feature>
<feature type="binding site" evidence="1">
    <location>
        <begin position="294"/>
        <end position="297"/>
    </location>
    <ligand>
        <name>GTP</name>
        <dbReference type="ChEBI" id="CHEBI:37565"/>
        <label>2</label>
    </ligand>
</feature>
<reference key="1">
    <citation type="journal article" date="2006" name="Proc. Natl. Acad. Sci. U.S.A.">
        <title>Comparative genomics of the lactic acid bacteria.</title>
        <authorList>
            <person name="Makarova K.S."/>
            <person name="Slesarev A."/>
            <person name="Wolf Y.I."/>
            <person name="Sorokin A."/>
            <person name="Mirkin B."/>
            <person name="Koonin E.V."/>
            <person name="Pavlov A."/>
            <person name="Pavlova N."/>
            <person name="Karamychev V."/>
            <person name="Polouchine N."/>
            <person name="Shakhova V."/>
            <person name="Grigoriev I."/>
            <person name="Lou Y."/>
            <person name="Rohksar D."/>
            <person name="Lucas S."/>
            <person name="Huang K."/>
            <person name="Goodstein D.M."/>
            <person name="Hawkins T."/>
            <person name="Plengvidhya V."/>
            <person name="Welker D."/>
            <person name="Hughes J."/>
            <person name="Goh Y."/>
            <person name="Benson A."/>
            <person name="Baldwin K."/>
            <person name="Lee J.-H."/>
            <person name="Diaz-Muniz I."/>
            <person name="Dosti B."/>
            <person name="Smeianov V."/>
            <person name="Wechter W."/>
            <person name="Barabote R."/>
            <person name="Lorca G."/>
            <person name="Altermann E."/>
            <person name="Barrangou R."/>
            <person name="Ganesan B."/>
            <person name="Xie Y."/>
            <person name="Rawsthorne H."/>
            <person name="Tamir D."/>
            <person name="Parker C."/>
            <person name="Breidt F."/>
            <person name="Broadbent J.R."/>
            <person name="Hutkins R."/>
            <person name="O'Sullivan D."/>
            <person name="Steele J."/>
            <person name="Unlu G."/>
            <person name="Saier M.H. Jr."/>
            <person name="Klaenhammer T."/>
            <person name="Richardson P."/>
            <person name="Kozyavkin S."/>
            <person name="Weimer B.C."/>
            <person name="Mills D.A."/>
        </authorList>
    </citation>
    <scope>NUCLEOTIDE SEQUENCE [LARGE SCALE GENOMIC DNA]</scope>
    <source>
        <strain>ATCC BAA-491 / LMD-9</strain>
    </source>
</reference>